<organism>
    <name type="scientific">Drosophila melanogaster</name>
    <name type="common">Fruit fly</name>
    <dbReference type="NCBI Taxonomy" id="7227"/>
    <lineage>
        <taxon>Eukaryota</taxon>
        <taxon>Metazoa</taxon>
        <taxon>Ecdysozoa</taxon>
        <taxon>Arthropoda</taxon>
        <taxon>Hexapoda</taxon>
        <taxon>Insecta</taxon>
        <taxon>Pterygota</taxon>
        <taxon>Neoptera</taxon>
        <taxon>Endopterygota</taxon>
        <taxon>Diptera</taxon>
        <taxon>Brachycera</taxon>
        <taxon>Muscomorpha</taxon>
        <taxon>Ephydroidea</taxon>
        <taxon>Drosophilidae</taxon>
        <taxon>Drosophila</taxon>
        <taxon>Sophophora</taxon>
    </lineage>
</organism>
<sequence length="357" mass="39344">MSMFWGLNMKPERKYSQTIIKSFHISGVALDKGQEAKLYLAAEKQEYIVATVTKAIPQVALDLNFSKGDRIMFYTAGDASVSLLGYLHDIDSEDDEDDDQMTIENLLNSKAIKNSKKSEDDEDENESGEEDEEDTDDDSQIIEEYESFLENGEEEDDDDVDEDNEESGEEDEQDSDDSEAEEEQPKAKVAKLSPGASAKKSGKEQNGVAKKEEAKQQQKKKEKPEAKKEQPKAKEPAKQQPASKDPRTITGGVKIVDQVVGKGEEAKQGKRVSVYYIGRLQSNNKTFDSLLKGKPFKFALGGGEVIKGWDVGVAGMKVGGKRVITCPPHMAYGARGAPPKIGPNSTLVFEVELKAVH</sequence>
<name>FKB39_DROME</name>
<comment type="function">
    <text>PPIases accelerate the folding of proteins. May function in a signal transduction cascade during early development.</text>
</comment>
<comment type="catalytic activity">
    <reaction>
        <text>[protein]-peptidylproline (omega=180) = [protein]-peptidylproline (omega=0)</text>
        <dbReference type="Rhea" id="RHEA:16237"/>
        <dbReference type="Rhea" id="RHEA-COMP:10747"/>
        <dbReference type="Rhea" id="RHEA-COMP:10748"/>
        <dbReference type="ChEBI" id="CHEBI:83833"/>
        <dbReference type="ChEBI" id="CHEBI:83834"/>
        <dbReference type="EC" id="5.2.1.8"/>
    </reaction>
</comment>
<comment type="subcellular location">
    <subcellularLocation>
        <location evidence="7">Nucleus</location>
    </subcellularLocation>
</comment>
<comment type="tissue specificity">
    <text evidence="5">Ubiquitously expressed, highest levels in ovary.</text>
</comment>
<comment type="developmental stage">
    <text evidence="5">Expressed during all stages of development with highest expression in early embryo.</text>
</comment>
<comment type="similarity">
    <text evidence="7">Belongs to the FKBP-type PPIase family.</text>
</comment>
<comment type="caution">
    <text evidence="7">It is uncertain whether Met-1 or Met-3 is the initiator.</text>
</comment>
<dbReference type="EC" id="5.2.1.8"/>
<dbReference type="EMBL" id="Z46894">
    <property type="protein sequence ID" value="CAA86996.1"/>
    <property type="molecule type" value="mRNA"/>
</dbReference>
<dbReference type="EMBL" id="AE014297">
    <property type="protein sequence ID" value="AAF55171.2"/>
    <property type="molecule type" value="Genomic_DNA"/>
</dbReference>
<dbReference type="EMBL" id="AY094814">
    <property type="protein sequence ID" value="AAM11167.1"/>
    <property type="molecule type" value="mRNA"/>
</dbReference>
<dbReference type="PIR" id="JC4090">
    <property type="entry name" value="JC4090"/>
</dbReference>
<dbReference type="RefSeq" id="NP_524364.2">
    <property type="nucleotide sequence ID" value="NM_079640.3"/>
</dbReference>
<dbReference type="PDB" id="4CA9">
    <property type="method" value="NMR"/>
    <property type="chains" value="A/B/C/D/E=3-92"/>
</dbReference>
<dbReference type="PDBsum" id="4CA9"/>
<dbReference type="BMRB" id="P54397"/>
<dbReference type="SASBDB" id="P54397"/>
<dbReference type="SMR" id="P54397"/>
<dbReference type="BioGRID" id="66923">
    <property type="interactions" value="85"/>
</dbReference>
<dbReference type="DIP" id="DIP-22384N"/>
<dbReference type="FunCoup" id="P54397">
    <property type="interactions" value="201"/>
</dbReference>
<dbReference type="IntAct" id="P54397">
    <property type="interactions" value="19"/>
</dbReference>
<dbReference type="STRING" id="7227.FBpp0082574"/>
<dbReference type="iPTMnet" id="P54397"/>
<dbReference type="PaxDb" id="7227-FBpp0082574"/>
<dbReference type="DNASU" id="41860"/>
<dbReference type="EnsemblMetazoa" id="FBtr0083120">
    <property type="protein sequence ID" value="FBpp0082574"/>
    <property type="gene ID" value="FBgn0013269"/>
</dbReference>
<dbReference type="GeneID" id="41860"/>
<dbReference type="KEGG" id="dme:Dmel_CG6226"/>
<dbReference type="AGR" id="FB:FBgn0013269"/>
<dbReference type="CTD" id="41860"/>
<dbReference type="FlyBase" id="FBgn0013269">
    <property type="gene designation" value="Fkbp39"/>
</dbReference>
<dbReference type="VEuPathDB" id="VectorBase:FBgn0013269"/>
<dbReference type="eggNOG" id="KOG0552">
    <property type="taxonomic scope" value="Eukaryota"/>
</dbReference>
<dbReference type="GeneTree" id="ENSGT00940000174423"/>
<dbReference type="HOGENOM" id="CLU_022297_0_0_1"/>
<dbReference type="InParanoid" id="P54397"/>
<dbReference type="OMA" id="CPPHMAY"/>
<dbReference type="OrthoDB" id="1902587at2759"/>
<dbReference type="PhylomeDB" id="P54397"/>
<dbReference type="SignaLink" id="P54397"/>
<dbReference type="BioGRID-ORCS" id="41860">
    <property type="hits" value="0 hits in 1 CRISPR screen"/>
</dbReference>
<dbReference type="EvolutionaryTrace" id="P54397"/>
<dbReference type="GenomeRNAi" id="41860"/>
<dbReference type="PRO" id="PR:P54397"/>
<dbReference type="Proteomes" id="UP000000803">
    <property type="component" value="Chromosome 3R"/>
</dbReference>
<dbReference type="Bgee" id="FBgn0013269">
    <property type="expression patterns" value="Expressed in eye disc (Drosophila) and 180 other cell types or tissues"/>
</dbReference>
<dbReference type="GO" id="GO:0000785">
    <property type="term" value="C:chromatin"/>
    <property type="evidence" value="ECO:0000318"/>
    <property type="project" value="GO_Central"/>
</dbReference>
<dbReference type="GO" id="GO:0000792">
    <property type="term" value="C:heterochromatin"/>
    <property type="evidence" value="ECO:0000314"/>
    <property type="project" value="FlyBase"/>
</dbReference>
<dbReference type="GO" id="GO:0005730">
    <property type="term" value="C:nucleolus"/>
    <property type="evidence" value="ECO:0000314"/>
    <property type="project" value="FlyBase"/>
</dbReference>
<dbReference type="GO" id="GO:0005634">
    <property type="term" value="C:nucleus"/>
    <property type="evidence" value="ECO:0000314"/>
    <property type="project" value="FlyBase"/>
</dbReference>
<dbReference type="GO" id="GO:0003690">
    <property type="term" value="F:double-stranded DNA binding"/>
    <property type="evidence" value="ECO:0000314"/>
    <property type="project" value="FlyBase"/>
</dbReference>
<dbReference type="GO" id="GO:0005528">
    <property type="term" value="F:FK506 binding"/>
    <property type="evidence" value="ECO:0000314"/>
    <property type="project" value="FlyBase"/>
</dbReference>
<dbReference type="GO" id="GO:0070594">
    <property type="term" value="F:juvenile hormone response element binding"/>
    <property type="evidence" value="ECO:0000314"/>
    <property type="project" value="FlyBase"/>
</dbReference>
<dbReference type="GO" id="GO:0003755">
    <property type="term" value="F:peptidyl-prolyl cis-trans isomerase activity"/>
    <property type="evidence" value="ECO:0000318"/>
    <property type="project" value="GO_Central"/>
</dbReference>
<dbReference type="GO" id="GO:0035626">
    <property type="term" value="P:juvenile hormone mediated signaling pathway"/>
    <property type="evidence" value="ECO:0000315"/>
    <property type="project" value="FlyBase"/>
</dbReference>
<dbReference type="GO" id="GO:0010507">
    <property type="term" value="P:negative regulation of autophagy"/>
    <property type="evidence" value="ECO:0000315"/>
    <property type="project" value="FlyBase"/>
</dbReference>
<dbReference type="GO" id="GO:0016242">
    <property type="term" value="P:negative regulation of macroautophagy"/>
    <property type="evidence" value="ECO:0000315"/>
    <property type="project" value="FlyBase"/>
</dbReference>
<dbReference type="FunFam" id="2.60.120.340:FF:000013">
    <property type="entry name" value="39 kDa FK506-binding nuclear protein"/>
    <property type="match status" value="1"/>
</dbReference>
<dbReference type="FunFam" id="3.10.50.40:FF:000041">
    <property type="entry name" value="FK506-binding nuclear protein"/>
    <property type="match status" value="1"/>
</dbReference>
<dbReference type="Gene3D" id="3.10.50.40">
    <property type="match status" value="1"/>
</dbReference>
<dbReference type="Gene3D" id="2.60.120.340">
    <property type="entry name" value="Nucleoplasmin core domain"/>
    <property type="match status" value="1"/>
</dbReference>
<dbReference type="InterPro" id="IPR041232">
    <property type="entry name" value="NPL"/>
</dbReference>
<dbReference type="InterPro" id="IPR046357">
    <property type="entry name" value="PPIase_dom_sf"/>
</dbReference>
<dbReference type="InterPro" id="IPR001179">
    <property type="entry name" value="PPIase_FKBP_dom"/>
</dbReference>
<dbReference type="InterPro" id="IPR023566">
    <property type="entry name" value="PPIase_Fpr3/Fpr4-like"/>
</dbReference>
<dbReference type="PANTHER" id="PTHR43811:SF19">
    <property type="entry name" value="39 KDA FK506-BINDING NUCLEAR PROTEIN"/>
    <property type="match status" value="1"/>
</dbReference>
<dbReference type="PANTHER" id="PTHR43811">
    <property type="entry name" value="FKBP-TYPE PEPTIDYL-PROLYL CIS-TRANS ISOMERASE FKPA"/>
    <property type="match status" value="1"/>
</dbReference>
<dbReference type="Pfam" id="PF00254">
    <property type="entry name" value="FKBP_C"/>
    <property type="match status" value="1"/>
</dbReference>
<dbReference type="Pfam" id="PF17800">
    <property type="entry name" value="NPL"/>
    <property type="match status" value="1"/>
</dbReference>
<dbReference type="PIRSF" id="PIRSF001473">
    <property type="entry name" value="FK506-bp_FPR3"/>
    <property type="match status" value="1"/>
</dbReference>
<dbReference type="SUPFAM" id="SSF54534">
    <property type="entry name" value="FKBP-like"/>
    <property type="match status" value="1"/>
</dbReference>
<dbReference type="PROSITE" id="PS50059">
    <property type="entry name" value="FKBP_PPIASE"/>
    <property type="match status" value="1"/>
</dbReference>
<evidence type="ECO:0000255" key="1">
    <source>
        <dbReference type="PROSITE-ProRule" id="PRU00277"/>
    </source>
</evidence>
<evidence type="ECO:0000256" key="2">
    <source>
        <dbReference type="SAM" id="MobiDB-lite"/>
    </source>
</evidence>
<evidence type="ECO:0000269" key="3">
    <source>
    </source>
</evidence>
<evidence type="ECO:0000269" key="4">
    <source>
    </source>
</evidence>
<evidence type="ECO:0000269" key="5">
    <source>
    </source>
</evidence>
<evidence type="ECO:0000303" key="6">
    <source>
    </source>
</evidence>
<evidence type="ECO:0000305" key="7"/>
<evidence type="ECO:0000312" key="8">
    <source>
        <dbReference type="FlyBase" id="FBgn0013269"/>
    </source>
</evidence>
<evidence type="ECO:0007829" key="9">
    <source>
        <dbReference type="PDB" id="4CA9"/>
    </source>
</evidence>
<protein>
    <recommendedName>
        <fullName evidence="6">39 kDa FK506-binding nuclear protein</fullName>
        <ecNumber>5.2.1.8</ecNumber>
    </recommendedName>
    <alternativeName>
        <fullName>Peptidyl-prolyl cis-trans isomerase</fullName>
        <shortName>PPIase</shortName>
    </alternativeName>
    <alternativeName>
        <fullName>Rotamase</fullName>
    </alternativeName>
</protein>
<accession>P54397</accession>
<accession>Q9VF88</accession>
<gene>
    <name evidence="6 8" type="primary">Fkbp39</name>
    <name evidence="8" type="synonym">FK506-bp1</name>
    <name evidence="8" type="ORF">CG6226</name>
</gene>
<keyword id="KW-0002">3D-structure</keyword>
<keyword id="KW-0413">Isomerase</keyword>
<keyword id="KW-0539">Nucleus</keyword>
<keyword id="KW-0597">Phosphoprotein</keyword>
<keyword id="KW-1185">Reference proteome</keyword>
<keyword id="KW-0697">Rotamase</keyword>
<reference key="1">
    <citation type="journal article" date="1995" name="Gene">
        <title>FKBP39, a Drosophila member of a family of proteins that bind the immunosuppressive drug FK506.</title>
        <authorList>
            <person name="Theopold U."/>
            <person name="Dal Zotto L."/>
            <person name="Hultmark D."/>
        </authorList>
    </citation>
    <scope>NUCLEOTIDE SEQUENCE [MRNA]</scope>
    <scope>TISSUE SPECIFICITY</scope>
    <scope>DEVELOPMENTAL STAGE</scope>
    <source>
        <strain>Canton-S</strain>
    </source>
</reference>
<reference key="2">
    <citation type="journal article" date="2000" name="Science">
        <title>The genome sequence of Drosophila melanogaster.</title>
        <authorList>
            <person name="Adams M.D."/>
            <person name="Celniker S.E."/>
            <person name="Holt R.A."/>
            <person name="Evans C.A."/>
            <person name="Gocayne J.D."/>
            <person name="Amanatides P.G."/>
            <person name="Scherer S.E."/>
            <person name="Li P.W."/>
            <person name="Hoskins R.A."/>
            <person name="Galle R.F."/>
            <person name="George R.A."/>
            <person name="Lewis S.E."/>
            <person name="Richards S."/>
            <person name="Ashburner M."/>
            <person name="Henderson S.N."/>
            <person name="Sutton G.G."/>
            <person name="Wortman J.R."/>
            <person name="Yandell M.D."/>
            <person name="Zhang Q."/>
            <person name="Chen L.X."/>
            <person name="Brandon R.C."/>
            <person name="Rogers Y.-H.C."/>
            <person name="Blazej R.G."/>
            <person name="Champe M."/>
            <person name="Pfeiffer B.D."/>
            <person name="Wan K.H."/>
            <person name="Doyle C."/>
            <person name="Baxter E.G."/>
            <person name="Helt G."/>
            <person name="Nelson C.R."/>
            <person name="Miklos G.L.G."/>
            <person name="Abril J.F."/>
            <person name="Agbayani A."/>
            <person name="An H.-J."/>
            <person name="Andrews-Pfannkoch C."/>
            <person name="Baldwin D."/>
            <person name="Ballew R.M."/>
            <person name="Basu A."/>
            <person name="Baxendale J."/>
            <person name="Bayraktaroglu L."/>
            <person name="Beasley E.M."/>
            <person name="Beeson K.Y."/>
            <person name="Benos P.V."/>
            <person name="Berman B.P."/>
            <person name="Bhandari D."/>
            <person name="Bolshakov S."/>
            <person name="Borkova D."/>
            <person name="Botchan M.R."/>
            <person name="Bouck J."/>
            <person name="Brokstein P."/>
            <person name="Brottier P."/>
            <person name="Burtis K.C."/>
            <person name="Busam D.A."/>
            <person name="Butler H."/>
            <person name="Cadieu E."/>
            <person name="Center A."/>
            <person name="Chandra I."/>
            <person name="Cherry J.M."/>
            <person name="Cawley S."/>
            <person name="Dahlke C."/>
            <person name="Davenport L.B."/>
            <person name="Davies P."/>
            <person name="de Pablos B."/>
            <person name="Delcher A."/>
            <person name="Deng Z."/>
            <person name="Mays A.D."/>
            <person name="Dew I."/>
            <person name="Dietz S.M."/>
            <person name="Dodson K."/>
            <person name="Doup L.E."/>
            <person name="Downes M."/>
            <person name="Dugan-Rocha S."/>
            <person name="Dunkov B.C."/>
            <person name="Dunn P."/>
            <person name="Durbin K.J."/>
            <person name="Evangelista C.C."/>
            <person name="Ferraz C."/>
            <person name="Ferriera S."/>
            <person name="Fleischmann W."/>
            <person name="Fosler C."/>
            <person name="Gabrielian A.E."/>
            <person name="Garg N.S."/>
            <person name="Gelbart W.M."/>
            <person name="Glasser K."/>
            <person name="Glodek A."/>
            <person name="Gong F."/>
            <person name="Gorrell J.H."/>
            <person name="Gu Z."/>
            <person name="Guan P."/>
            <person name="Harris M."/>
            <person name="Harris N.L."/>
            <person name="Harvey D.A."/>
            <person name="Heiman T.J."/>
            <person name="Hernandez J.R."/>
            <person name="Houck J."/>
            <person name="Hostin D."/>
            <person name="Houston K.A."/>
            <person name="Howland T.J."/>
            <person name="Wei M.-H."/>
            <person name="Ibegwam C."/>
            <person name="Jalali M."/>
            <person name="Kalush F."/>
            <person name="Karpen G.H."/>
            <person name="Ke Z."/>
            <person name="Kennison J.A."/>
            <person name="Ketchum K.A."/>
            <person name="Kimmel B.E."/>
            <person name="Kodira C.D."/>
            <person name="Kraft C.L."/>
            <person name="Kravitz S."/>
            <person name="Kulp D."/>
            <person name="Lai Z."/>
            <person name="Lasko P."/>
            <person name="Lei Y."/>
            <person name="Levitsky A.A."/>
            <person name="Li J.H."/>
            <person name="Li Z."/>
            <person name="Liang Y."/>
            <person name="Lin X."/>
            <person name="Liu X."/>
            <person name="Mattei B."/>
            <person name="McIntosh T.C."/>
            <person name="McLeod M.P."/>
            <person name="McPherson D."/>
            <person name="Merkulov G."/>
            <person name="Milshina N.V."/>
            <person name="Mobarry C."/>
            <person name="Morris J."/>
            <person name="Moshrefi A."/>
            <person name="Mount S.M."/>
            <person name="Moy M."/>
            <person name="Murphy B."/>
            <person name="Murphy L."/>
            <person name="Muzny D.M."/>
            <person name="Nelson D.L."/>
            <person name="Nelson D.R."/>
            <person name="Nelson K.A."/>
            <person name="Nixon K."/>
            <person name="Nusskern D.R."/>
            <person name="Pacleb J.M."/>
            <person name="Palazzolo M."/>
            <person name="Pittman G.S."/>
            <person name="Pan S."/>
            <person name="Pollard J."/>
            <person name="Puri V."/>
            <person name="Reese M.G."/>
            <person name="Reinert K."/>
            <person name="Remington K."/>
            <person name="Saunders R.D.C."/>
            <person name="Scheeler F."/>
            <person name="Shen H."/>
            <person name="Shue B.C."/>
            <person name="Siden-Kiamos I."/>
            <person name="Simpson M."/>
            <person name="Skupski M.P."/>
            <person name="Smith T.J."/>
            <person name="Spier E."/>
            <person name="Spradling A.C."/>
            <person name="Stapleton M."/>
            <person name="Strong R."/>
            <person name="Sun E."/>
            <person name="Svirskas R."/>
            <person name="Tector C."/>
            <person name="Turner R."/>
            <person name="Venter E."/>
            <person name="Wang A.H."/>
            <person name="Wang X."/>
            <person name="Wang Z.-Y."/>
            <person name="Wassarman D.A."/>
            <person name="Weinstock G.M."/>
            <person name="Weissenbach J."/>
            <person name="Williams S.M."/>
            <person name="Woodage T."/>
            <person name="Worley K.C."/>
            <person name="Wu D."/>
            <person name="Yang S."/>
            <person name="Yao Q.A."/>
            <person name="Ye J."/>
            <person name="Yeh R.-F."/>
            <person name="Zaveri J.S."/>
            <person name="Zhan M."/>
            <person name="Zhang G."/>
            <person name="Zhao Q."/>
            <person name="Zheng L."/>
            <person name="Zheng X.H."/>
            <person name="Zhong F.N."/>
            <person name="Zhong W."/>
            <person name="Zhou X."/>
            <person name="Zhu S.C."/>
            <person name="Zhu X."/>
            <person name="Smith H.O."/>
            <person name="Gibbs R.A."/>
            <person name="Myers E.W."/>
            <person name="Rubin G.M."/>
            <person name="Venter J.C."/>
        </authorList>
    </citation>
    <scope>NUCLEOTIDE SEQUENCE [LARGE SCALE GENOMIC DNA]</scope>
    <source>
        <strain>Berkeley</strain>
    </source>
</reference>
<reference key="3">
    <citation type="journal article" date="2002" name="Genome Biol.">
        <title>Annotation of the Drosophila melanogaster euchromatic genome: a systematic review.</title>
        <authorList>
            <person name="Misra S."/>
            <person name="Crosby M.A."/>
            <person name="Mungall C.J."/>
            <person name="Matthews B.B."/>
            <person name="Campbell K.S."/>
            <person name="Hradecky P."/>
            <person name="Huang Y."/>
            <person name="Kaminker J.S."/>
            <person name="Millburn G.H."/>
            <person name="Prochnik S.E."/>
            <person name="Smith C.D."/>
            <person name="Tupy J.L."/>
            <person name="Whitfield E.J."/>
            <person name="Bayraktaroglu L."/>
            <person name="Berman B.P."/>
            <person name="Bettencourt B.R."/>
            <person name="Celniker S.E."/>
            <person name="de Grey A.D.N.J."/>
            <person name="Drysdale R.A."/>
            <person name="Harris N.L."/>
            <person name="Richter J."/>
            <person name="Russo S."/>
            <person name="Schroeder A.J."/>
            <person name="Shu S.Q."/>
            <person name="Stapleton M."/>
            <person name="Yamada C."/>
            <person name="Ashburner M."/>
            <person name="Gelbart W.M."/>
            <person name="Rubin G.M."/>
            <person name="Lewis S.E."/>
        </authorList>
    </citation>
    <scope>GENOME REANNOTATION</scope>
    <source>
        <strain>Berkeley</strain>
    </source>
</reference>
<reference key="4">
    <citation type="journal article" date="2002" name="Genome Biol.">
        <title>A Drosophila full-length cDNA resource.</title>
        <authorList>
            <person name="Stapleton M."/>
            <person name="Carlson J.W."/>
            <person name="Brokstein P."/>
            <person name="Yu C."/>
            <person name="Champe M."/>
            <person name="George R.A."/>
            <person name="Guarin H."/>
            <person name="Kronmiller B."/>
            <person name="Pacleb J.M."/>
            <person name="Park S."/>
            <person name="Wan K.H."/>
            <person name="Rubin G.M."/>
            <person name="Celniker S.E."/>
        </authorList>
    </citation>
    <scope>NUCLEOTIDE SEQUENCE [LARGE SCALE MRNA]</scope>
    <source>
        <strain>Berkeley</strain>
        <tissue>Embryo</tissue>
    </source>
</reference>
<reference key="5">
    <citation type="journal article" date="2007" name="Mol. Biosyst.">
        <title>An integrated chemical, mass spectrometric and computational strategy for (quantitative) phosphoproteomics: application to Drosophila melanogaster Kc167 cells.</title>
        <authorList>
            <person name="Bodenmiller B."/>
            <person name="Mueller L.N."/>
            <person name="Pedrioli P.G.A."/>
            <person name="Pflieger D."/>
            <person name="Juenger M.A."/>
            <person name="Eng J.K."/>
            <person name="Aebersold R."/>
            <person name="Tao W.A."/>
        </authorList>
    </citation>
    <scope>PHOSPHORYLATION [LARGE SCALE ANALYSIS] AT SER-92</scope>
    <scope>IDENTIFICATION BY MASS SPECTROMETRY</scope>
</reference>
<reference key="6">
    <citation type="journal article" date="2008" name="J. Proteome Res.">
        <title>Phosphoproteome analysis of Drosophila melanogaster embryos.</title>
        <authorList>
            <person name="Zhai B."/>
            <person name="Villen J."/>
            <person name="Beausoleil S.A."/>
            <person name="Mintseris J."/>
            <person name="Gygi S.P."/>
        </authorList>
    </citation>
    <scope>PHOSPHORYLATION [LARGE SCALE ANALYSIS] AT SER-193 AND SER-197</scope>
    <scope>IDENTIFICATION BY MASS SPECTROMETRY</scope>
    <source>
        <tissue>Embryo</tissue>
    </source>
</reference>
<feature type="chain" id="PRO_0000075310" description="39 kDa FK506-binding nuclear protein">
    <location>
        <begin position="1"/>
        <end position="357"/>
    </location>
</feature>
<feature type="domain" description="PPIase FKBP-type" evidence="1">
    <location>
        <begin position="269"/>
        <end position="357"/>
    </location>
</feature>
<feature type="region of interest" description="Disordered" evidence="2">
    <location>
        <begin position="113"/>
        <end position="251"/>
    </location>
</feature>
<feature type="compositionally biased region" description="Acidic residues" evidence="2">
    <location>
        <begin position="120"/>
        <end position="182"/>
    </location>
</feature>
<feature type="compositionally biased region" description="Basic and acidic residues" evidence="2">
    <location>
        <begin position="222"/>
        <end position="237"/>
    </location>
</feature>
<feature type="modified residue" description="Phosphoserine" evidence="3">
    <location>
        <position position="92"/>
    </location>
</feature>
<feature type="modified residue" description="Phosphoserine" evidence="4">
    <location>
        <position position="193"/>
    </location>
</feature>
<feature type="modified residue" description="Phosphoserine" evidence="4">
    <location>
        <position position="197"/>
    </location>
</feature>
<feature type="sequence conflict" description="In Ref. 1; CAA86996." evidence="7" ref="1">
    <original>A</original>
    <variation>R</variation>
    <location>
        <position position="187"/>
    </location>
</feature>
<feature type="strand" evidence="9">
    <location>
        <begin position="3"/>
        <end position="9"/>
    </location>
</feature>
<feature type="strand" evidence="9">
    <location>
        <begin position="14"/>
        <end position="18"/>
    </location>
</feature>
<feature type="strand" evidence="9">
    <location>
        <begin position="23"/>
        <end position="42"/>
    </location>
</feature>
<feature type="strand" evidence="9">
    <location>
        <begin position="45"/>
        <end position="56"/>
    </location>
</feature>
<feature type="strand" evidence="9">
    <location>
        <begin position="63"/>
        <end position="65"/>
    </location>
</feature>
<feature type="strand" evidence="9">
    <location>
        <begin position="69"/>
        <end position="88"/>
    </location>
</feature>
<proteinExistence type="evidence at protein level"/>